<keyword id="KW-0053">Apoptosis</keyword>
<keyword id="KW-0072">Autophagy</keyword>
<keyword id="KW-1003">Cell membrane</keyword>
<keyword id="KW-0182">Cone-rod dystrophy</keyword>
<keyword id="KW-0225">Disease variant</keyword>
<keyword id="KW-0458">Lysosome</keyword>
<keyword id="KW-0472">Membrane</keyword>
<keyword id="KW-1267">Proteomics identification</keyword>
<keyword id="KW-1185">Reference proteome</keyword>
<keyword id="KW-0812">Transmembrane</keyword>
<keyword id="KW-1133">Transmembrane helix</keyword>
<reference key="1">
    <citation type="submission" date="2003-07" db="EMBL/GenBank/DDBJ databases">
        <title>Identification of a novel human putative transmembrane protein that is up-regulated in hepatoma.</title>
        <authorList>
            <person name="Xu J."/>
            <person name="Xie Y."/>
            <person name="Mao Y."/>
        </authorList>
    </citation>
    <scope>NUCLEOTIDE SEQUENCE [MRNA]</scope>
</reference>
<reference key="2">
    <citation type="submission" date="2007-06" db="EMBL/GenBank/DDBJ databases">
        <title>Cloning of DRAM-like protein.</title>
        <authorList>
            <person name="Seo Y.-J."/>
            <person name="Kim K."/>
            <person name="Park J."/>
        </authorList>
    </citation>
    <scope>NUCLEOTIDE SEQUENCE [MRNA]</scope>
</reference>
<reference key="3">
    <citation type="journal article" date="2003" name="Genome Res.">
        <title>The secreted protein discovery initiative (SPDI), a large-scale effort to identify novel human secreted and transmembrane proteins: a bioinformatics assessment.</title>
        <authorList>
            <person name="Clark H.F."/>
            <person name="Gurney A.L."/>
            <person name="Abaya E."/>
            <person name="Baker K."/>
            <person name="Baldwin D.T."/>
            <person name="Brush J."/>
            <person name="Chen J."/>
            <person name="Chow B."/>
            <person name="Chui C."/>
            <person name="Crowley C."/>
            <person name="Currell B."/>
            <person name="Deuel B."/>
            <person name="Dowd P."/>
            <person name="Eaton D."/>
            <person name="Foster J.S."/>
            <person name="Grimaldi C."/>
            <person name="Gu Q."/>
            <person name="Hass P.E."/>
            <person name="Heldens S."/>
            <person name="Huang A."/>
            <person name="Kim H.S."/>
            <person name="Klimowski L."/>
            <person name="Jin Y."/>
            <person name="Johnson S."/>
            <person name="Lee J."/>
            <person name="Lewis L."/>
            <person name="Liao D."/>
            <person name="Mark M.R."/>
            <person name="Robbie E."/>
            <person name="Sanchez C."/>
            <person name="Schoenfeld J."/>
            <person name="Seshagiri S."/>
            <person name="Simmons L."/>
            <person name="Singh J."/>
            <person name="Smith V."/>
            <person name="Stinson J."/>
            <person name="Vagts A."/>
            <person name="Vandlen R.L."/>
            <person name="Watanabe C."/>
            <person name="Wieand D."/>
            <person name="Woods K."/>
            <person name="Xie M.-H."/>
            <person name="Yansura D.G."/>
            <person name="Yi S."/>
            <person name="Yu G."/>
            <person name="Yuan J."/>
            <person name="Zhang M."/>
            <person name="Zhang Z."/>
            <person name="Goddard A.D."/>
            <person name="Wood W.I."/>
            <person name="Godowski P.J."/>
            <person name="Gray A.M."/>
        </authorList>
    </citation>
    <scope>NUCLEOTIDE SEQUENCE [LARGE SCALE MRNA]</scope>
</reference>
<reference key="4">
    <citation type="journal article" date="2006" name="Nature">
        <title>The DNA sequence and biological annotation of human chromosome 1.</title>
        <authorList>
            <person name="Gregory S.G."/>
            <person name="Barlow K.F."/>
            <person name="McLay K.E."/>
            <person name="Kaul R."/>
            <person name="Swarbreck D."/>
            <person name="Dunham A."/>
            <person name="Scott C.E."/>
            <person name="Howe K.L."/>
            <person name="Woodfine K."/>
            <person name="Spencer C.C.A."/>
            <person name="Jones M.C."/>
            <person name="Gillson C."/>
            <person name="Searle S."/>
            <person name="Zhou Y."/>
            <person name="Kokocinski F."/>
            <person name="McDonald L."/>
            <person name="Evans R."/>
            <person name="Phillips K."/>
            <person name="Atkinson A."/>
            <person name="Cooper R."/>
            <person name="Jones C."/>
            <person name="Hall R.E."/>
            <person name="Andrews T.D."/>
            <person name="Lloyd C."/>
            <person name="Ainscough R."/>
            <person name="Almeida J.P."/>
            <person name="Ambrose K.D."/>
            <person name="Anderson F."/>
            <person name="Andrew R.W."/>
            <person name="Ashwell R.I.S."/>
            <person name="Aubin K."/>
            <person name="Babbage A.K."/>
            <person name="Bagguley C.L."/>
            <person name="Bailey J."/>
            <person name="Beasley H."/>
            <person name="Bethel G."/>
            <person name="Bird C.P."/>
            <person name="Bray-Allen S."/>
            <person name="Brown J.Y."/>
            <person name="Brown A.J."/>
            <person name="Buckley D."/>
            <person name="Burton J."/>
            <person name="Bye J."/>
            <person name="Carder C."/>
            <person name="Chapman J.C."/>
            <person name="Clark S.Y."/>
            <person name="Clarke G."/>
            <person name="Clee C."/>
            <person name="Cobley V."/>
            <person name="Collier R.E."/>
            <person name="Corby N."/>
            <person name="Coville G.J."/>
            <person name="Davies J."/>
            <person name="Deadman R."/>
            <person name="Dunn M."/>
            <person name="Earthrowl M."/>
            <person name="Ellington A.G."/>
            <person name="Errington H."/>
            <person name="Frankish A."/>
            <person name="Frankland J."/>
            <person name="French L."/>
            <person name="Garner P."/>
            <person name="Garnett J."/>
            <person name="Gay L."/>
            <person name="Ghori M.R.J."/>
            <person name="Gibson R."/>
            <person name="Gilby L.M."/>
            <person name="Gillett W."/>
            <person name="Glithero R.J."/>
            <person name="Grafham D.V."/>
            <person name="Griffiths C."/>
            <person name="Griffiths-Jones S."/>
            <person name="Grocock R."/>
            <person name="Hammond S."/>
            <person name="Harrison E.S.I."/>
            <person name="Hart E."/>
            <person name="Haugen E."/>
            <person name="Heath P.D."/>
            <person name="Holmes S."/>
            <person name="Holt K."/>
            <person name="Howden P.J."/>
            <person name="Hunt A.R."/>
            <person name="Hunt S.E."/>
            <person name="Hunter G."/>
            <person name="Isherwood J."/>
            <person name="James R."/>
            <person name="Johnson C."/>
            <person name="Johnson D."/>
            <person name="Joy A."/>
            <person name="Kay M."/>
            <person name="Kershaw J.K."/>
            <person name="Kibukawa M."/>
            <person name="Kimberley A.M."/>
            <person name="King A."/>
            <person name="Knights A.J."/>
            <person name="Lad H."/>
            <person name="Laird G."/>
            <person name="Lawlor S."/>
            <person name="Leongamornlert D.A."/>
            <person name="Lloyd D.M."/>
            <person name="Loveland J."/>
            <person name="Lovell J."/>
            <person name="Lush M.J."/>
            <person name="Lyne R."/>
            <person name="Martin S."/>
            <person name="Mashreghi-Mohammadi M."/>
            <person name="Matthews L."/>
            <person name="Matthews N.S.W."/>
            <person name="McLaren S."/>
            <person name="Milne S."/>
            <person name="Mistry S."/>
            <person name="Moore M.J.F."/>
            <person name="Nickerson T."/>
            <person name="O'Dell C.N."/>
            <person name="Oliver K."/>
            <person name="Palmeiri A."/>
            <person name="Palmer S.A."/>
            <person name="Parker A."/>
            <person name="Patel D."/>
            <person name="Pearce A.V."/>
            <person name="Peck A.I."/>
            <person name="Pelan S."/>
            <person name="Phelps K."/>
            <person name="Phillimore B.J."/>
            <person name="Plumb R."/>
            <person name="Rajan J."/>
            <person name="Raymond C."/>
            <person name="Rouse G."/>
            <person name="Saenphimmachak C."/>
            <person name="Sehra H.K."/>
            <person name="Sheridan E."/>
            <person name="Shownkeen R."/>
            <person name="Sims S."/>
            <person name="Skuce C.D."/>
            <person name="Smith M."/>
            <person name="Steward C."/>
            <person name="Subramanian S."/>
            <person name="Sycamore N."/>
            <person name="Tracey A."/>
            <person name="Tromans A."/>
            <person name="Van Helmond Z."/>
            <person name="Wall M."/>
            <person name="Wallis J.M."/>
            <person name="White S."/>
            <person name="Whitehead S.L."/>
            <person name="Wilkinson J.E."/>
            <person name="Willey D.L."/>
            <person name="Williams H."/>
            <person name="Wilming L."/>
            <person name="Wray P.W."/>
            <person name="Wu Z."/>
            <person name="Coulson A."/>
            <person name="Vaudin M."/>
            <person name="Sulston J.E."/>
            <person name="Durbin R.M."/>
            <person name="Hubbard T."/>
            <person name="Wooster R."/>
            <person name="Dunham I."/>
            <person name="Carter N.P."/>
            <person name="McVean G."/>
            <person name="Ross M.T."/>
            <person name="Harrow J."/>
            <person name="Olson M.V."/>
            <person name="Beck S."/>
            <person name="Rogers J."/>
            <person name="Bentley D.R."/>
        </authorList>
    </citation>
    <scope>NUCLEOTIDE SEQUENCE [LARGE SCALE GENOMIC DNA]</scope>
</reference>
<reference key="5">
    <citation type="submission" date="2005-07" db="EMBL/GenBank/DDBJ databases">
        <authorList>
            <person name="Mural R.J."/>
            <person name="Istrail S."/>
            <person name="Sutton G.G."/>
            <person name="Florea L."/>
            <person name="Halpern A.L."/>
            <person name="Mobarry C.M."/>
            <person name="Lippert R."/>
            <person name="Walenz B."/>
            <person name="Shatkay H."/>
            <person name="Dew I."/>
            <person name="Miller J.R."/>
            <person name="Flanigan M.J."/>
            <person name="Edwards N.J."/>
            <person name="Bolanos R."/>
            <person name="Fasulo D."/>
            <person name="Halldorsson B.V."/>
            <person name="Hannenhalli S."/>
            <person name="Turner R."/>
            <person name="Yooseph S."/>
            <person name="Lu F."/>
            <person name="Nusskern D.R."/>
            <person name="Shue B.C."/>
            <person name="Zheng X.H."/>
            <person name="Zhong F."/>
            <person name="Delcher A.L."/>
            <person name="Huson D.H."/>
            <person name="Kravitz S.A."/>
            <person name="Mouchard L."/>
            <person name="Reinert K."/>
            <person name="Remington K.A."/>
            <person name="Clark A.G."/>
            <person name="Waterman M.S."/>
            <person name="Eichler E.E."/>
            <person name="Adams M.D."/>
            <person name="Hunkapiller M.W."/>
            <person name="Myers E.W."/>
            <person name="Venter J.C."/>
        </authorList>
    </citation>
    <scope>NUCLEOTIDE SEQUENCE [LARGE SCALE GENOMIC DNA]</scope>
</reference>
<reference key="6">
    <citation type="journal article" date="2004" name="Genome Res.">
        <title>The status, quality, and expansion of the NIH full-length cDNA project: the Mammalian Gene Collection (MGC).</title>
        <authorList>
            <consortium name="The MGC Project Team"/>
        </authorList>
    </citation>
    <scope>NUCLEOTIDE SEQUENCE [LARGE SCALE MRNA]</scope>
    <source>
        <tissue>Brain</tissue>
        <tissue>Eye</tissue>
    </source>
</reference>
<reference key="7">
    <citation type="journal article" date="2005" name="DNA Res.">
        <title>Signal sequence and keyword trap in silico for selection of full-length human cDNAs encoding secretion or membrane proteins from oligo-capped cDNA libraries.</title>
        <authorList>
            <person name="Otsuki T."/>
            <person name="Ota T."/>
            <person name="Nishikawa T."/>
            <person name="Hayashi K."/>
            <person name="Suzuki Y."/>
            <person name="Yamamoto J."/>
            <person name="Wakamatsu A."/>
            <person name="Kimura K."/>
            <person name="Sakamoto K."/>
            <person name="Hatano N."/>
            <person name="Kawai Y."/>
            <person name="Ishii S."/>
            <person name="Saito K."/>
            <person name="Kojima S."/>
            <person name="Sugiyama T."/>
            <person name="Ono T."/>
            <person name="Okano K."/>
            <person name="Yoshikawa Y."/>
            <person name="Aotsuka S."/>
            <person name="Sasaki N."/>
            <person name="Hattori A."/>
            <person name="Okumura K."/>
            <person name="Nagai K."/>
            <person name="Sugano S."/>
            <person name="Isogai T."/>
        </authorList>
    </citation>
    <scope>NUCLEOTIDE SEQUENCE [LARGE SCALE MRNA] OF 100-266</scope>
    <source>
        <tissue>Teratocarcinoma</tissue>
    </source>
</reference>
<reference key="8">
    <citation type="journal article" date="2009" name="Biochem. Biophys. Res. Commun.">
        <title>Reduced expression of DRAM2/TMEM77 in tumor cells interferes with cell death.</title>
        <authorList>
            <person name="Park S.M."/>
            <person name="Kim K."/>
            <person name="Lee E.J."/>
            <person name="Kim B.K."/>
            <person name="Lee T.J."/>
            <person name="Seo T."/>
            <person name="Jang I.S."/>
            <person name="Lee S.H."/>
            <person name="Kim S."/>
            <person name="Lee J.H."/>
            <person name="Park J."/>
        </authorList>
    </citation>
    <scope>FUNCTION</scope>
    <scope>SUBCELLULAR LOCATION</scope>
    <scope>TISSUE SPECIFICITY</scope>
</reference>
<reference key="9">
    <citation type="journal article" date="2009" name="Cell Cycle">
        <title>Analysis of DRAM-related proteins reveals evolutionarily conserved and divergent roles in the control of autophagy.</title>
        <authorList>
            <person name="O'Prey J."/>
            <person name="Skommer J."/>
            <person name="Wilkinson S."/>
            <person name="Ryan K.M."/>
        </authorList>
    </citation>
    <scope>SUBCELLULAR LOCATION</scope>
    <scope>TISSUE SPECIFICITY</scope>
    <scope>INDUCTION</scope>
</reference>
<reference key="10">
    <citation type="journal article" date="2015" name="Am. J. Hum. Genet.">
        <title>Biallelic mutations in the autophagy regulator DRAM2 cause retinal dystrophy with early macular involvement.</title>
        <authorList>
            <consortium name="UK Inherited Retinal Disease Consortium"/>
            <person name="El-Asrag M.E."/>
            <person name="Sergouniotis P.I."/>
            <person name="McKibbin M."/>
            <person name="Plagnol V."/>
            <person name="Sheridan E."/>
            <person name="Waseem N."/>
            <person name="Abdelhamed Z."/>
            <person name="McKeefry D."/>
            <person name="Van Schil K."/>
            <person name="Poulter J.A."/>
            <person name="Johnson C.A."/>
            <person name="Carr I.M."/>
            <person name="Leroy B.P."/>
            <person name="De Baere E."/>
            <person name="Inglehearn C.F."/>
            <person name="Webster A.R."/>
            <person name="Toomes C."/>
            <person name="Ali M."/>
        </authorList>
    </citation>
    <scope>FUNCTION</scope>
    <scope>TISSUE SPECIFICITY</scope>
    <scope>INVOLVEMENT IN CORD21</scope>
    <scope>VARIANTS CORD21 ALA-22 DEL; HIS-27; ASN-44; 73-VAL--TYR-75 DEL AND LEU-121</scope>
</reference>
<gene>
    <name type="primary">DRAM2</name>
    <name type="synonym">TMEM77</name>
    <name type="ORF">PSEC0031</name>
    <name type="ORF">UNQ154/PRO180</name>
</gene>
<evidence type="ECO:0000250" key="1">
    <source>
        <dbReference type="UniProtKB" id="Q9CR48"/>
    </source>
</evidence>
<evidence type="ECO:0000255" key="2"/>
<evidence type="ECO:0000269" key="3">
    <source>
    </source>
</evidence>
<evidence type="ECO:0000269" key="4">
    <source>
    </source>
</evidence>
<evidence type="ECO:0000269" key="5">
    <source>
    </source>
</evidence>
<evidence type="ECO:0000305" key="6"/>
<feature type="chain" id="PRO_0000254102" description="DNA damage-regulated autophagy modulator protein 2">
    <location>
        <begin position="1"/>
        <end position="266"/>
    </location>
</feature>
<feature type="transmembrane region" description="Helical" evidence="2">
    <location>
        <begin position="8"/>
        <end position="28"/>
    </location>
</feature>
<feature type="transmembrane region" description="Helical" evidence="2">
    <location>
        <begin position="53"/>
        <end position="73"/>
    </location>
</feature>
<feature type="transmembrane region" description="Helical" evidence="2">
    <location>
        <begin position="88"/>
        <end position="108"/>
    </location>
</feature>
<feature type="transmembrane region" description="Helical" evidence="2">
    <location>
        <begin position="118"/>
        <end position="138"/>
    </location>
</feature>
<feature type="transmembrane region" description="Helical" evidence="2">
    <location>
        <begin position="160"/>
        <end position="180"/>
    </location>
</feature>
<feature type="transmembrane region" description="Helical" evidence="2">
    <location>
        <begin position="207"/>
        <end position="227"/>
    </location>
</feature>
<feature type="sequence variant" id="VAR_075073" description="In CORD21." evidence="5">
    <location>
        <position position="22"/>
    </location>
</feature>
<feature type="sequence variant" id="VAR_075074" description="In CORD21; dbSNP:rs786205662." evidence="5">
    <original>Y</original>
    <variation>H</variation>
    <location>
        <position position="27"/>
    </location>
</feature>
<feature type="sequence variant" id="VAR_075075" description="In CORD21; dbSNP:rs786205665." evidence="5">
    <original>S</original>
    <variation>N</variation>
    <location>
        <position position="44"/>
    </location>
</feature>
<feature type="sequence variant" id="VAR_075076" description="In CORD21." evidence="5">
    <location>
        <begin position="73"/>
        <end position="75"/>
    </location>
</feature>
<feature type="sequence variant" id="VAR_075077" description="In CORD21; dbSNP:rs786205664." evidence="5">
    <original>H</original>
    <variation>L</variation>
    <location>
        <position position="121"/>
    </location>
</feature>
<feature type="sequence conflict" description="In Ref. 1; AAR02410." evidence="6" ref="1">
    <original>G</original>
    <variation>V</variation>
    <location>
        <position position="221"/>
    </location>
</feature>
<protein>
    <recommendedName>
        <fullName>DNA damage-regulated autophagy modulator protein 2</fullName>
    </recommendedName>
    <alternativeName>
        <fullName>Transmembrane protein 77</fullName>
    </alternativeName>
</protein>
<comment type="function">
    <text evidence="4 5">Plays a role in the initiation of autophagy. In the retina, might be involved in the process of photoreceptor cells renewal and recycling to preserve visual function. Induces apoptotic cell death when coexpressed with DRAM1.</text>
</comment>
<comment type="subcellular location">
    <subcellularLocation>
        <location evidence="3 4">Lysosome membrane</location>
        <topology evidence="3 4">Multi-pass membrane protein</topology>
    </subcellularLocation>
    <subcellularLocation>
        <location evidence="1">Photoreceptor inner segment</location>
    </subcellularLocation>
    <subcellularLocation>
        <location evidence="1">Apical cell membrane</location>
    </subcellularLocation>
    <text evidence="1">Localized to photoreceptor inner segments and to the apical surface of retinal pigment epithelial cells.</text>
</comment>
<comment type="tissue specificity">
    <text evidence="3 4 5">Expression is down-regulated in ovarian tumors (at protein level). Widely expressed with highest levels in placenta and heart. Expressed in the retina. Not detected in brain or thymus.</text>
</comment>
<comment type="induction">
    <text evidence="3">Not induced by p53/TP53 or TP73/p73.</text>
</comment>
<comment type="disease" evidence="5">
    <disease id="DI-04505">
        <name>Cone-rod dystrophy 21</name>
        <acronym>CORD21</acronym>
        <description>A form of cone-rod dystrophy, an inherited retinal dystrophy characterized by retinal pigment deposits visible on fundus examination, predominantly in the macular region, and initial loss of cone photoreceptors followed by rod degeneration. This leads to decreased visual acuity and sensitivity in the central visual field, followed by loss of peripheral vision. Severe loss of vision occurs earlier than in retinitis pigmentosa, due to cone photoreceptors degenerating at a higher rate than rod photoreceptors.</description>
        <dbReference type="MIM" id="616502"/>
    </disease>
    <text>The disease is caused by variants affecting the gene represented in this entry.</text>
</comment>
<comment type="similarity">
    <text evidence="6">Belongs to the DRAM/TMEM150 family.</text>
</comment>
<comment type="sequence caution" evidence="6">
    <conflict type="erroneous initiation">
        <sequence resource="EMBL-CDS" id="BAC11562"/>
    </conflict>
</comment>
<organism>
    <name type="scientific">Homo sapiens</name>
    <name type="common">Human</name>
    <dbReference type="NCBI Taxonomy" id="9606"/>
    <lineage>
        <taxon>Eukaryota</taxon>
        <taxon>Metazoa</taxon>
        <taxon>Chordata</taxon>
        <taxon>Craniata</taxon>
        <taxon>Vertebrata</taxon>
        <taxon>Euteleostomi</taxon>
        <taxon>Mammalia</taxon>
        <taxon>Eutheria</taxon>
        <taxon>Euarchontoglires</taxon>
        <taxon>Primates</taxon>
        <taxon>Haplorrhini</taxon>
        <taxon>Catarrhini</taxon>
        <taxon>Hominidae</taxon>
        <taxon>Homo</taxon>
    </lineage>
</organism>
<sequence>MWWFQQGLSFLPSALVIWTSAAFIFSYITAVTLHHIDPALPYISDTGTVAPEKCLFGAMLNIAAVLCIATIYVRYKQVHALSPEENVIIKLNKAGLVLGILSCLGLSIVANFQKTTLFAAHVSGAVLTFGMGSLYMFVQTILSYQMQPKIHGKQVFWIRLLLVIWCGVSALSMLTCSSVLHSGNFGTDLEQKLHWNPEDKGYVLHMITTAAEWSMSFSFFGFFLTYIRDFQKISLRVEANLHGLTLYDTAPCPINNERTRLLSRDI</sequence>
<accession>Q6UX65</accession>
<accession>B3SUG9</accession>
<accession>Q4VWF6</accession>
<accession>Q86VD3</accession>
<accession>Q8NBQ4</accession>
<proteinExistence type="evidence at protein level"/>
<dbReference type="EMBL" id="AY336747">
    <property type="protein sequence ID" value="AAR02410.1"/>
    <property type="molecule type" value="mRNA"/>
</dbReference>
<dbReference type="EMBL" id="EF710624">
    <property type="protein sequence ID" value="ABR27678.1"/>
    <property type="molecule type" value="mRNA"/>
</dbReference>
<dbReference type="EMBL" id="AY358492">
    <property type="protein sequence ID" value="AAQ88856.1"/>
    <property type="molecule type" value="mRNA"/>
</dbReference>
<dbReference type="EMBL" id="AL355816">
    <property type="status" value="NOT_ANNOTATED_CDS"/>
    <property type="molecule type" value="Genomic_DNA"/>
</dbReference>
<dbReference type="EMBL" id="CH471122">
    <property type="protein sequence ID" value="EAW56464.1"/>
    <property type="molecule type" value="Genomic_DNA"/>
</dbReference>
<dbReference type="EMBL" id="BC047025">
    <property type="protein sequence ID" value="AAH47025.3"/>
    <property type="molecule type" value="mRNA"/>
</dbReference>
<dbReference type="EMBL" id="BC091509">
    <property type="protein sequence ID" value="AAH91509.1"/>
    <property type="molecule type" value="mRNA"/>
</dbReference>
<dbReference type="EMBL" id="AK075350">
    <property type="protein sequence ID" value="BAC11562.1"/>
    <property type="status" value="ALT_INIT"/>
    <property type="molecule type" value="mRNA"/>
</dbReference>
<dbReference type="CCDS" id="CCDS30801.1"/>
<dbReference type="RefSeq" id="NP_001336810.1">
    <property type="nucleotide sequence ID" value="NM_001349881.2"/>
</dbReference>
<dbReference type="RefSeq" id="NP_001336811.1">
    <property type="nucleotide sequence ID" value="NM_001349882.2"/>
</dbReference>
<dbReference type="RefSeq" id="NP_001336813.1">
    <property type="nucleotide sequence ID" value="NM_001349884.2"/>
</dbReference>
<dbReference type="RefSeq" id="NP_001336814.1">
    <property type="nucleotide sequence ID" value="NM_001349885.2"/>
</dbReference>
<dbReference type="RefSeq" id="NP_848549.3">
    <property type="nucleotide sequence ID" value="NM_178454.6"/>
</dbReference>
<dbReference type="RefSeq" id="XP_005270526.1">
    <property type="nucleotide sequence ID" value="XM_005270469.2"/>
</dbReference>
<dbReference type="RefSeq" id="XP_005270527.1">
    <property type="nucleotide sequence ID" value="XM_005270470.1"/>
</dbReference>
<dbReference type="RefSeq" id="XP_011539009.1">
    <property type="nucleotide sequence ID" value="XM_011540707.1"/>
</dbReference>
<dbReference type="RefSeq" id="XP_011539010.1">
    <property type="nucleotide sequence ID" value="XM_011540708.2"/>
</dbReference>
<dbReference type="RefSeq" id="XP_047302198.1">
    <property type="nucleotide sequence ID" value="XM_047446242.1"/>
</dbReference>
<dbReference type="RefSeq" id="XP_054190424.1">
    <property type="nucleotide sequence ID" value="XM_054334449.1"/>
</dbReference>
<dbReference type="BioGRID" id="126108">
    <property type="interactions" value="6"/>
</dbReference>
<dbReference type="FunCoup" id="Q6UX65">
    <property type="interactions" value="1543"/>
</dbReference>
<dbReference type="IntAct" id="Q6UX65">
    <property type="interactions" value="6"/>
</dbReference>
<dbReference type="STRING" id="9606.ENSP00000286692"/>
<dbReference type="TCDB" id="8.A.113.1.9">
    <property type="family name" value="the tentonin or tmem150 (tmem150) family"/>
</dbReference>
<dbReference type="iPTMnet" id="Q6UX65"/>
<dbReference type="PhosphoSitePlus" id="Q6UX65"/>
<dbReference type="SwissPalm" id="Q6UX65"/>
<dbReference type="BioMuta" id="DRAM2"/>
<dbReference type="DMDM" id="74749415"/>
<dbReference type="jPOST" id="Q6UX65"/>
<dbReference type="MassIVE" id="Q6UX65"/>
<dbReference type="PaxDb" id="9606-ENSP00000286692"/>
<dbReference type="PeptideAtlas" id="Q6UX65"/>
<dbReference type="ProteomicsDB" id="67568"/>
<dbReference type="Pumba" id="Q6UX65"/>
<dbReference type="Antibodypedia" id="20104">
    <property type="antibodies" value="71 antibodies from 19 providers"/>
</dbReference>
<dbReference type="DNASU" id="128338"/>
<dbReference type="Ensembl" id="ENST00000286692.8">
    <property type="protein sequence ID" value="ENSP00000286692.4"/>
    <property type="gene ID" value="ENSG00000156171.15"/>
</dbReference>
<dbReference type="Ensembl" id="ENST00000484310.6">
    <property type="protein sequence ID" value="ENSP00000503400.1"/>
    <property type="gene ID" value="ENSG00000156171.15"/>
</dbReference>
<dbReference type="Ensembl" id="ENST00000539140.6">
    <property type="protein sequence ID" value="ENSP00000437718.1"/>
    <property type="gene ID" value="ENSG00000156171.15"/>
</dbReference>
<dbReference type="GeneID" id="128338"/>
<dbReference type="KEGG" id="hsa:128338"/>
<dbReference type="MANE-Select" id="ENST00000484310.6">
    <property type="protein sequence ID" value="ENSP00000503400.1"/>
    <property type="RefSeq nucleotide sequence ID" value="NM_001349884.2"/>
    <property type="RefSeq protein sequence ID" value="NP_001336813.1"/>
</dbReference>
<dbReference type="UCSC" id="uc001ead.5">
    <property type="organism name" value="human"/>
</dbReference>
<dbReference type="AGR" id="HGNC:28769"/>
<dbReference type="CTD" id="128338"/>
<dbReference type="DisGeNET" id="128338"/>
<dbReference type="GeneCards" id="DRAM2"/>
<dbReference type="HGNC" id="HGNC:28769">
    <property type="gene designation" value="DRAM2"/>
</dbReference>
<dbReference type="HPA" id="ENSG00000156171">
    <property type="expression patterns" value="Low tissue specificity"/>
</dbReference>
<dbReference type="MalaCards" id="DRAM2"/>
<dbReference type="MIM" id="613360">
    <property type="type" value="gene"/>
</dbReference>
<dbReference type="MIM" id="616502">
    <property type="type" value="phenotype"/>
</dbReference>
<dbReference type="neXtProt" id="NX_Q6UX65"/>
<dbReference type="OpenTargets" id="ENSG00000156171"/>
<dbReference type="Orphanet" id="1872">
    <property type="disease" value="Cone rod dystrophy"/>
</dbReference>
<dbReference type="PharmGKB" id="PA165751270"/>
<dbReference type="VEuPathDB" id="HostDB:ENSG00000156171"/>
<dbReference type="eggNOG" id="KOG4320">
    <property type="taxonomic scope" value="Eukaryota"/>
</dbReference>
<dbReference type="GeneTree" id="ENSGT01030000234578"/>
<dbReference type="HOGENOM" id="CLU_059992_2_2_1"/>
<dbReference type="InParanoid" id="Q6UX65"/>
<dbReference type="OMA" id="SEWCLAF"/>
<dbReference type="OrthoDB" id="191706at2759"/>
<dbReference type="PAN-GO" id="Q6UX65">
    <property type="GO annotations" value="3 GO annotations based on evolutionary models"/>
</dbReference>
<dbReference type="PhylomeDB" id="Q6UX65"/>
<dbReference type="TreeFam" id="TF314508"/>
<dbReference type="PathwayCommons" id="Q6UX65"/>
<dbReference type="SignaLink" id="Q6UX65"/>
<dbReference type="SIGNOR" id="Q6UX65"/>
<dbReference type="BioGRID-ORCS" id="128338">
    <property type="hits" value="13 hits in 1150 CRISPR screens"/>
</dbReference>
<dbReference type="ChiTaRS" id="DRAM2">
    <property type="organism name" value="human"/>
</dbReference>
<dbReference type="GenomeRNAi" id="128338"/>
<dbReference type="Pharos" id="Q6UX65">
    <property type="development level" value="Tbio"/>
</dbReference>
<dbReference type="PRO" id="PR:Q6UX65"/>
<dbReference type="Proteomes" id="UP000005640">
    <property type="component" value="Chromosome 1"/>
</dbReference>
<dbReference type="RNAct" id="Q6UX65">
    <property type="molecule type" value="protein"/>
</dbReference>
<dbReference type="Bgee" id="ENSG00000156171">
    <property type="expression patterns" value="Expressed in monocyte and 182 other cell types or tissues"/>
</dbReference>
<dbReference type="ExpressionAtlas" id="Q6UX65">
    <property type="expression patterns" value="baseline and differential"/>
</dbReference>
<dbReference type="GO" id="GO:0016324">
    <property type="term" value="C:apical plasma membrane"/>
    <property type="evidence" value="ECO:0000250"/>
    <property type="project" value="UniProtKB"/>
</dbReference>
<dbReference type="GO" id="GO:0005737">
    <property type="term" value="C:cytoplasm"/>
    <property type="evidence" value="ECO:0000314"/>
    <property type="project" value="UniProtKB"/>
</dbReference>
<dbReference type="GO" id="GO:0005794">
    <property type="term" value="C:Golgi apparatus"/>
    <property type="evidence" value="ECO:0000314"/>
    <property type="project" value="HPA"/>
</dbReference>
<dbReference type="GO" id="GO:0043231">
    <property type="term" value="C:intracellular membrane-bounded organelle"/>
    <property type="evidence" value="ECO:0000314"/>
    <property type="project" value="HPA"/>
</dbReference>
<dbReference type="GO" id="GO:0005765">
    <property type="term" value="C:lysosomal membrane"/>
    <property type="evidence" value="ECO:0007669"/>
    <property type="project" value="UniProtKB-SubCell"/>
</dbReference>
<dbReference type="GO" id="GO:0005764">
    <property type="term" value="C:lysosome"/>
    <property type="evidence" value="ECO:0000314"/>
    <property type="project" value="UniProtKB"/>
</dbReference>
<dbReference type="GO" id="GO:0001917">
    <property type="term" value="C:photoreceptor inner segment"/>
    <property type="evidence" value="ECO:0000250"/>
    <property type="project" value="UniProtKB"/>
</dbReference>
<dbReference type="GO" id="GO:0006915">
    <property type="term" value="P:apoptotic process"/>
    <property type="evidence" value="ECO:0007669"/>
    <property type="project" value="UniProtKB-KW"/>
</dbReference>
<dbReference type="GO" id="GO:0006914">
    <property type="term" value="P:autophagy"/>
    <property type="evidence" value="ECO:0007669"/>
    <property type="project" value="UniProtKB-KW"/>
</dbReference>
<dbReference type="GO" id="GO:0008283">
    <property type="term" value="P:cell population proliferation"/>
    <property type="evidence" value="ECO:0007669"/>
    <property type="project" value="Ensembl"/>
</dbReference>
<dbReference type="GO" id="GO:0045494">
    <property type="term" value="P:photoreceptor cell maintenance"/>
    <property type="evidence" value="ECO:0000315"/>
    <property type="project" value="UniProtKB"/>
</dbReference>
<dbReference type="GO" id="GO:0010506">
    <property type="term" value="P:regulation of autophagy"/>
    <property type="evidence" value="ECO:0000314"/>
    <property type="project" value="UniProtKB"/>
</dbReference>
<dbReference type="GO" id="GO:0060041">
    <property type="term" value="P:retina development in camera-type eye"/>
    <property type="evidence" value="ECO:0007669"/>
    <property type="project" value="Ensembl"/>
</dbReference>
<dbReference type="GO" id="GO:0007601">
    <property type="term" value="P:visual perception"/>
    <property type="evidence" value="ECO:0000315"/>
    <property type="project" value="UniProtKB"/>
</dbReference>
<dbReference type="InterPro" id="IPR050911">
    <property type="entry name" value="DRAM/TMEM150_Autophagy_Mod"/>
</dbReference>
<dbReference type="InterPro" id="IPR019402">
    <property type="entry name" value="Frag1/DRAM/Sfk1"/>
</dbReference>
<dbReference type="PANTHER" id="PTHR21324:SF10">
    <property type="entry name" value="DNA DAMAGE-REGULATED AUTOPHAGY MODULATOR PROTEIN 2"/>
    <property type="match status" value="1"/>
</dbReference>
<dbReference type="PANTHER" id="PTHR21324">
    <property type="entry name" value="FASTING-INDUCIBLE INTEGRAL MEMBRANE PROTEIN TM6P1-RELATED"/>
    <property type="match status" value="1"/>
</dbReference>
<dbReference type="Pfam" id="PF10277">
    <property type="entry name" value="Frag1"/>
    <property type="match status" value="1"/>
</dbReference>
<name>DRAM2_HUMAN</name>